<name>TBB2_SUIBO</name>
<accession>Q8J1R4</accession>
<reference key="1">
    <citation type="submission" date="2002-09" db="EMBL/GenBank/DDBJ databases">
        <title>The second beta tubulin gene of ectomycorrhizal basidiomycete Suillus bovinus.</title>
        <authorList>
            <person name="Juuti J.T."/>
            <person name="Jokela S."/>
        </authorList>
    </citation>
    <scope>NUCLEOTIDE SEQUENCE</scope>
</reference>
<reference key="2">
    <citation type="journal article" date="2005" name="Curr. Genet.">
        <title>Two phylogenetically highly distinct beta-tubulin genes of the basidiomycete Suillus bovinus.</title>
        <authorList>
            <person name="Juuti J.T."/>
            <person name="Jokela S."/>
            <person name="Tarkka M.T."/>
            <person name="Paulin L."/>
            <person name="Lahdensalo J."/>
        </authorList>
    </citation>
    <scope>NUCLEOTIDE SEQUENCE</scope>
    <source>
        <strain>SBH1</strain>
    </source>
</reference>
<comment type="function">
    <text>Tubulin is the major constituent of microtubules, a cylinder consisting of laterally associated linear protofilaments composed of alpha- and beta-tubulin heterodimers. Microtubules grow by the addition of GTP-tubulin dimers to the microtubule end, where a stabilizing cap forms. Below the cap, tubulin dimers are in GDP-bound state, owing to GTPase activity of alpha-tubulin.</text>
</comment>
<comment type="cofactor">
    <cofactor evidence="1">
        <name>Mg(2+)</name>
        <dbReference type="ChEBI" id="CHEBI:18420"/>
    </cofactor>
</comment>
<comment type="subunit">
    <text>Dimer of alpha and beta chains. A typical microtubule is a hollow water-filled tube with an outer diameter of 25 nm and an inner diameter of 15 nM. Alpha-beta heterodimers associate head-to-tail to form protofilaments running lengthwise along the microtubule wall with the beta-tubulin subunit facing the microtubule plus end conferring a structural polarity. Microtubules usually have 13 protofilaments but different protofilament numbers can be found in some organisms and specialized cells.</text>
</comment>
<comment type="subcellular location">
    <subcellularLocation>
        <location>Cytoplasm</location>
        <location>Cytoskeleton</location>
    </subcellularLocation>
</comment>
<comment type="similarity">
    <text evidence="3">Belongs to the tubulin family.</text>
</comment>
<protein>
    <recommendedName>
        <fullName>Tubulin beta-2 chain</fullName>
    </recommendedName>
    <alternativeName>
        <fullName>Beta-2-tubulin</fullName>
    </alternativeName>
</protein>
<keyword id="KW-0963">Cytoplasm</keyword>
<keyword id="KW-0206">Cytoskeleton</keyword>
<keyword id="KW-0342">GTP-binding</keyword>
<keyword id="KW-0460">Magnesium</keyword>
<keyword id="KW-0479">Metal-binding</keyword>
<keyword id="KW-0493">Microtubule</keyword>
<keyword id="KW-0547">Nucleotide-binding</keyword>
<sequence length="445" mass="49484">MSREIVNIQAGQAGNQVGEAFWRMLLAEHGLDDAGMYKGNDPQQIARAGVYFTQVDSSGPTKYVPRSVQVDLESGVCNRLRSGPLGQLFRPDTYFTSDSGAGNNWAKGYYTEGAELIDGILDIVRRQCEATEALQGFQMIHSLGGGTGAGLGSLLLSKLREEYPDRMLSTFSILPAPNVSETVVEPYNSLLSIHQLVDNCDLTICIDNEALYDIAVRTLKIKSPGYKDLNQLIAKVMCGVSTSLRFPGQLNGDLRKLGMNLVPFPRLHFLMPSFAPFYDPKARTFQRLSVSELTSSLFDKKNLLVASDPRFGRYLTAACIFRGKVSSHEAENSVMQLQRKNSNLFVEWIPDNVSVSLCSVPPVGQPQAAVALANSTCMQELFKRNLDQFALMFKRRAFLHWYTGEGMDVMEFTEAESNTQDLISEYQQYQEATVEEEEADIEGEQ</sequence>
<dbReference type="EMBL" id="AJ509091">
    <property type="protein sequence ID" value="CAD48933.1"/>
    <property type="molecule type" value="mRNA"/>
</dbReference>
<dbReference type="EMBL" id="AJ698041">
    <property type="protein sequence ID" value="CAG27309.1"/>
    <property type="molecule type" value="Genomic_DNA"/>
</dbReference>
<dbReference type="SMR" id="Q8J1R4"/>
<dbReference type="OrthoDB" id="1662883at2759"/>
<dbReference type="GO" id="GO:0005737">
    <property type="term" value="C:cytoplasm"/>
    <property type="evidence" value="ECO:0007669"/>
    <property type="project" value="UniProtKB-KW"/>
</dbReference>
<dbReference type="GO" id="GO:0005874">
    <property type="term" value="C:microtubule"/>
    <property type="evidence" value="ECO:0007669"/>
    <property type="project" value="UniProtKB-KW"/>
</dbReference>
<dbReference type="GO" id="GO:0005525">
    <property type="term" value="F:GTP binding"/>
    <property type="evidence" value="ECO:0007669"/>
    <property type="project" value="UniProtKB-KW"/>
</dbReference>
<dbReference type="GO" id="GO:0003924">
    <property type="term" value="F:GTPase activity"/>
    <property type="evidence" value="ECO:0007669"/>
    <property type="project" value="InterPro"/>
</dbReference>
<dbReference type="GO" id="GO:0046872">
    <property type="term" value="F:metal ion binding"/>
    <property type="evidence" value="ECO:0007669"/>
    <property type="project" value="UniProtKB-KW"/>
</dbReference>
<dbReference type="GO" id="GO:0005200">
    <property type="term" value="F:structural constituent of cytoskeleton"/>
    <property type="evidence" value="ECO:0007669"/>
    <property type="project" value="InterPro"/>
</dbReference>
<dbReference type="GO" id="GO:0007017">
    <property type="term" value="P:microtubule-based process"/>
    <property type="evidence" value="ECO:0007669"/>
    <property type="project" value="InterPro"/>
</dbReference>
<dbReference type="CDD" id="cd02187">
    <property type="entry name" value="beta_tubulin"/>
    <property type="match status" value="1"/>
</dbReference>
<dbReference type="FunFam" id="1.10.287.600:FF:000013">
    <property type="entry name" value="Tubulin beta chain"/>
    <property type="match status" value="1"/>
</dbReference>
<dbReference type="FunFam" id="3.30.1330.20:FF:000009">
    <property type="entry name" value="Tubulin beta chain"/>
    <property type="match status" value="1"/>
</dbReference>
<dbReference type="FunFam" id="3.40.50.1440:FF:000006">
    <property type="entry name" value="Tubulin beta chain"/>
    <property type="match status" value="1"/>
</dbReference>
<dbReference type="Gene3D" id="1.10.287.600">
    <property type="entry name" value="Helix hairpin bin"/>
    <property type="match status" value="1"/>
</dbReference>
<dbReference type="Gene3D" id="3.30.1330.20">
    <property type="entry name" value="Tubulin/FtsZ, C-terminal domain"/>
    <property type="match status" value="1"/>
</dbReference>
<dbReference type="Gene3D" id="3.40.50.1440">
    <property type="entry name" value="Tubulin/FtsZ, GTPase domain"/>
    <property type="match status" value="1"/>
</dbReference>
<dbReference type="InterPro" id="IPR002453">
    <property type="entry name" value="Beta_tubulin"/>
</dbReference>
<dbReference type="InterPro" id="IPR008280">
    <property type="entry name" value="Tub_FtsZ_C"/>
</dbReference>
<dbReference type="InterPro" id="IPR000217">
    <property type="entry name" value="Tubulin"/>
</dbReference>
<dbReference type="InterPro" id="IPR037103">
    <property type="entry name" value="Tubulin/FtsZ-like_C"/>
</dbReference>
<dbReference type="InterPro" id="IPR018316">
    <property type="entry name" value="Tubulin/FtsZ_2-layer-sand-dom"/>
</dbReference>
<dbReference type="InterPro" id="IPR036525">
    <property type="entry name" value="Tubulin/FtsZ_GTPase_sf"/>
</dbReference>
<dbReference type="InterPro" id="IPR023123">
    <property type="entry name" value="Tubulin_C"/>
</dbReference>
<dbReference type="InterPro" id="IPR017975">
    <property type="entry name" value="Tubulin_CS"/>
</dbReference>
<dbReference type="InterPro" id="IPR003008">
    <property type="entry name" value="Tubulin_FtsZ_GTPase"/>
</dbReference>
<dbReference type="PANTHER" id="PTHR11588">
    <property type="entry name" value="TUBULIN"/>
    <property type="match status" value="1"/>
</dbReference>
<dbReference type="Pfam" id="PF00091">
    <property type="entry name" value="Tubulin"/>
    <property type="match status" value="1"/>
</dbReference>
<dbReference type="Pfam" id="PF03953">
    <property type="entry name" value="Tubulin_C"/>
    <property type="match status" value="1"/>
</dbReference>
<dbReference type="PRINTS" id="PR01163">
    <property type="entry name" value="BETATUBULIN"/>
</dbReference>
<dbReference type="PRINTS" id="PR01161">
    <property type="entry name" value="TUBULIN"/>
</dbReference>
<dbReference type="SMART" id="SM00864">
    <property type="entry name" value="Tubulin"/>
    <property type="match status" value="1"/>
</dbReference>
<dbReference type="SMART" id="SM00865">
    <property type="entry name" value="Tubulin_C"/>
    <property type="match status" value="1"/>
</dbReference>
<dbReference type="SUPFAM" id="SSF55307">
    <property type="entry name" value="Tubulin C-terminal domain-like"/>
    <property type="match status" value="1"/>
</dbReference>
<dbReference type="SUPFAM" id="SSF52490">
    <property type="entry name" value="Tubulin nucleotide-binding domain-like"/>
    <property type="match status" value="1"/>
</dbReference>
<dbReference type="PROSITE" id="PS00227">
    <property type="entry name" value="TUBULIN"/>
    <property type="match status" value="1"/>
</dbReference>
<organism>
    <name type="scientific">Suillus bovinus</name>
    <name type="common">Jersey cow bolete</name>
    <name type="synonym">Boletus bovinus</name>
    <dbReference type="NCBI Taxonomy" id="48563"/>
    <lineage>
        <taxon>Eukaryota</taxon>
        <taxon>Fungi</taxon>
        <taxon>Dikarya</taxon>
        <taxon>Basidiomycota</taxon>
        <taxon>Agaricomycotina</taxon>
        <taxon>Agaricomycetes</taxon>
        <taxon>Agaricomycetidae</taxon>
        <taxon>Boletales</taxon>
        <taxon>Suillineae</taxon>
        <taxon>Suillaceae</taxon>
        <taxon>Suillus</taxon>
    </lineage>
</organism>
<evidence type="ECO:0000250" key="1">
    <source>
        <dbReference type="UniProtKB" id="P68363"/>
    </source>
</evidence>
<evidence type="ECO:0000250" key="2">
    <source>
        <dbReference type="UniProtKB" id="Q13509"/>
    </source>
</evidence>
<evidence type="ECO:0000305" key="3"/>
<proteinExistence type="evidence at transcript level"/>
<feature type="chain" id="PRO_0000048432" description="Tubulin beta-2 chain">
    <location>
        <begin position="1"/>
        <end position="445"/>
    </location>
</feature>
<feature type="binding site" evidence="2">
    <location>
        <position position="12"/>
    </location>
    <ligand>
        <name>GTP</name>
        <dbReference type="ChEBI" id="CHEBI:37565"/>
    </ligand>
</feature>
<feature type="binding site" evidence="1">
    <location>
        <position position="73"/>
    </location>
    <ligand>
        <name>GTP</name>
        <dbReference type="ChEBI" id="CHEBI:37565"/>
    </ligand>
</feature>
<feature type="binding site" evidence="1">
    <location>
        <position position="73"/>
    </location>
    <ligand>
        <name>Mg(2+)</name>
        <dbReference type="ChEBI" id="CHEBI:18420"/>
    </ligand>
</feature>
<feature type="binding site" evidence="2">
    <location>
        <position position="142"/>
    </location>
    <ligand>
        <name>GTP</name>
        <dbReference type="ChEBI" id="CHEBI:37565"/>
    </ligand>
</feature>
<feature type="binding site" evidence="2">
    <location>
        <position position="146"/>
    </location>
    <ligand>
        <name>GTP</name>
        <dbReference type="ChEBI" id="CHEBI:37565"/>
    </ligand>
</feature>
<feature type="binding site" evidence="2">
    <location>
        <position position="147"/>
    </location>
    <ligand>
        <name>GTP</name>
        <dbReference type="ChEBI" id="CHEBI:37565"/>
    </ligand>
</feature>
<feature type="binding site" evidence="2">
    <location>
        <position position="148"/>
    </location>
    <ligand>
        <name>GTP</name>
        <dbReference type="ChEBI" id="CHEBI:37565"/>
    </ligand>
</feature>
<feature type="binding site" evidence="2">
    <location>
        <position position="208"/>
    </location>
    <ligand>
        <name>GTP</name>
        <dbReference type="ChEBI" id="CHEBI:37565"/>
    </ligand>
</feature>
<feature type="binding site" evidence="2">
    <location>
        <position position="230"/>
    </location>
    <ligand>
        <name>GTP</name>
        <dbReference type="ChEBI" id="CHEBI:37565"/>
    </ligand>
</feature>
<gene>
    <name type="primary">TUBB2</name>
</gene>